<organism>
    <name type="scientific">Paracoccidioides lutzii (strain ATCC MYA-826 / Pb01)</name>
    <name type="common">Paracoccidioides brasiliensis</name>
    <dbReference type="NCBI Taxonomy" id="502779"/>
    <lineage>
        <taxon>Eukaryota</taxon>
        <taxon>Fungi</taxon>
        <taxon>Dikarya</taxon>
        <taxon>Ascomycota</taxon>
        <taxon>Pezizomycotina</taxon>
        <taxon>Eurotiomycetes</taxon>
        <taxon>Eurotiomycetidae</taxon>
        <taxon>Onygenales</taxon>
        <taxon>Ajellomycetaceae</taxon>
        <taxon>Paracoccidioides</taxon>
    </lineage>
</organism>
<dbReference type="EC" id="3.6.-.-" evidence="1"/>
<dbReference type="EMBL" id="KN293995">
    <property type="protein sequence ID" value="EEH39758.1"/>
    <property type="molecule type" value="Genomic_DNA"/>
</dbReference>
<dbReference type="RefSeq" id="XP_002796059.1">
    <property type="nucleotide sequence ID" value="XM_002796013.2"/>
</dbReference>
<dbReference type="SMR" id="C1GTV2"/>
<dbReference type="STRING" id="502779.C1GTV2"/>
<dbReference type="GeneID" id="9099505"/>
<dbReference type="KEGG" id="pbl:PAAG_01947"/>
<dbReference type="VEuPathDB" id="FungiDB:PAAG_01947"/>
<dbReference type="eggNOG" id="KOG2825">
    <property type="taxonomic scope" value="Eukaryota"/>
</dbReference>
<dbReference type="HOGENOM" id="CLU_040761_0_0_1"/>
<dbReference type="OMA" id="MDAPYEF"/>
<dbReference type="OrthoDB" id="1770at2759"/>
<dbReference type="Proteomes" id="UP000002059">
    <property type="component" value="Partially assembled WGS sequence"/>
</dbReference>
<dbReference type="GO" id="GO:0043529">
    <property type="term" value="C:GET complex"/>
    <property type="evidence" value="ECO:0007669"/>
    <property type="project" value="TreeGrafter"/>
</dbReference>
<dbReference type="GO" id="GO:0005524">
    <property type="term" value="F:ATP binding"/>
    <property type="evidence" value="ECO:0007669"/>
    <property type="project" value="UniProtKB-UniRule"/>
</dbReference>
<dbReference type="GO" id="GO:0016887">
    <property type="term" value="F:ATP hydrolysis activity"/>
    <property type="evidence" value="ECO:0007669"/>
    <property type="project" value="InterPro"/>
</dbReference>
<dbReference type="GO" id="GO:0046872">
    <property type="term" value="F:metal ion binding"/>
    <property type="evidence" value="ECO:0007669"/>
    <property type="project" value="UniProtKB-KW"/>
</dbReference>
<dbReference type="GO" id="GO:0071816">
    <property type="term" value="P:tail-anchored membrane protein insertion into ER membrane"/>
    <property type="evidence" value="ECO:0007669"/>
    <property type="project" value="TreeGrafter"/>
</dbReference>
<dbReference type="CDD" id="cd02035">
    <property type="entry name" value="ArsA"/>
    <property type="match status" value="1"/>
</dbReference>
<dbReference type="FunFam" id="3.40.50.300:FF:000235">
    <property type="entry name" value="ATPase ASNA1"/>
    <property type="match status" value="1"/>
</dbReference>
<dbReference type="Gene3D" id="3.40.50.300">
    <property type="entry name" value="P-loop containing nucleotide triphosphate hydrolases"/>
    <property type="match status" value="1"/>
</dbReference>
<dbReference type="HAMAP" id="MF_03112">
    <property type="entry name" value="Asna1_Get3"/>
    <property type="match status" value="1"/>
</dbReference>
<dbReference type="InterPro" id="IPR025723">
    <property type="entry name" value="Anion-transp_ATPase-like_dom"/>
</dbReference>
<dbReference type="InterPro" id="IPR016300">
    <property type="entry name" value="ATPase_ArsA/GET3"/>
</dbReference>
<dbReference type="InterPro" id="IPR027542">
    <property type="entry name" value="ATPase_ArsA/GET3_euk"/>
</dbReference>
<dbReference type="InterPro" id="IPR027417">
    <property type="entry name" value="P-loop_NTPase"/>
</dbReference>
<dbReference type="NCBIfam" id="TIGR00345">
    <property type="entry name" value="GET3_arsA_TRC40"/>
    <property type="match status" value="1"/>
</dbReference>
<dbReference type="PANTHER" id="PTHR10803">
    <property type="entry name" value="ARSENICAL PUMP-DRIVING ATPASE ARSENITE-TRANSLOCATING ATPASE"/>
    <property type="match status" value="1"/>
</dbReference>
<dbReference type="PANTHER" id="PTHR10803:SF3">
    <property type="entry name" value="ATPASE GET3"/>
    <property type="match status" value="1"/>
</dbReference>
<dbReference type="Pfam" id="PF02374">
    <property type="entry name" value="ArsA_ATPase"/>
    <property type="match status" value="1"/>
</dbReference>
<dbReference type="SUPFAM" id="SSF52540">
    <property type="entry name" value="P-loop containing nucleoside triphosphate hydrolases"/>
    <property type="match status" value="1"/>
</dbReference>
<reference key="1">
    <citation type="journal article" date="2011" name="PLoS Genet.">
        <title>Comparative genomic analysis of human fungal pathogens causing paracoccidioidomycosis.</title>
        <authorList>
            <person name="Desjardins C.A."/>
            <person name="Champion M.D."/>
            <person name="Holder J.W."/>
            <person name="Muszewska A."/>
            <person name="Goldberg J."/>
            <person name="Bailao A.M."/>
            <person name="Brigido M.M."/>
            <person name="Ferreira M.E."/>
            <person name="Garcia A.M."/>
            <person name="Grynberg M."/>
            <person name="Gujja S."/>
            <person name="Heiman D.I."/>
            <person name="Henn M.R."/>
            <person name="Kodira C.D."/>
            <person name="Leon-Narvaez H."/>
            <person name="Longo L.V.G."/>
            <person name="Ma L.-J."/>
            <person name="Malavazi I."/>
            <person name="Matsuo A.L."/>
            <person name="Morais F.V."/>
            <person name="Pereira M."/>
            <person name="Rodriguez-Brito S."/>
            <person name="Sakthikumar S."/>
            <person name="Salem-Izacc S.M."/>
            <person name="Sykes S.M."/>
            <person name="Teixeira M.M."/>
            <person name="Vallejo M.C."/>
            <person name="Walter M.E."/>
            <person name="Yandava C."/>
            <person name="Young S."/>
            <person name="Zeng Q."/>
            <person name="Zucker J."/>
            <person name="Felipe M.S."/>
            <person name="Goldman G.H."/>
            <person name="Haas B.J."/>
            <person name="McEwen J.G."/>
            <person name="Nino-Vega G."/>
            <person name="Puccia R."/>
            <person name="San-Blas G."/>
            <person name="Soares C.M."/>
            <person name="Birren B.W."/>
            <person name="Cuomo C.A."/>
        </authorList>
    </citation>
    <scope>NUCLEOTIDE SEQUENCE [LARGE SCALE GENOMIC DNA]</scope>
    <source>
        <strain>ATCC MYA-826 / Pb01</strain>
    </source>
</reference>
<keyword id="KW-0067">ATP-binding</keyword>
<keyword id="KW-0963">Cytoplasm</keyword>
<keyword id="KW-0256">Endoplasmic reticulum</keyword>
<keyword id="KW-0378">Hydrolase</keyword>
<keyword id="KW-0479">Metal-binding</keyword>
<keyword id="KW-0547">Nucleotide-binding</keyword>
<keyword id="KW-1185">Reference proteome</keyword>
<keyword id="KW-0813">Transport</keyword>
<keyword id="KW-0862">Zinc</keyword>
<evidence type="ECO:0000255" key="1">
    <source>
        <dbReference type="HAMAP-Rule" id="MF_03112"/>
    </source>
</evidence>
<comment type="function">
    <text evidence="1">ATPase required for the post-translational delivery of tail-anchored (TA) proteins to the endoplasmic reticulum. Recognizes and selectively binds the transmembrane domain of TA proteins in the cytosol. This complex then targets to the endoplasmic reticulum by membrane-bound receptors, where the tail-anchored protein is released for insertion. This process is regulated by ATP binding and hydrolysis. ATP binding drives the homodimer towards the closed dimer state, facilitating recognition of newly synthesized TA membrane proteins. ATP hydrolysis is required for insertion. Subsequently, the homodimer reverts towards the open dimer state, lowering its affinity for the membrane-bound receptor, and returning it to the cytosol to initiate a new round of targeting.</text>
</comment>
<comment type="subunit">
    <text evidence="1">Homodimer.</text>
</comment>
<comment type="subcellular location">
    <subcellularLocation>
        <location evidence="1">Cytoplasm</location>
    </subcellularLocation>
    <subcellularLocation>
        <location evidence="1">Endoplasmic reticulum</location>
    </subcellularLocation>
</comment>
<comment type="similarity">
    <text evidence="1">Belongs to the arsA ATPase family.</text>
</comment>
<feature type="chain" id="PRO_0000388217" description="ATPase GET3">
    <location>
        <begin position="1"/>
        <end position="341"/>
    </location>
</feature>
<feature type="active site" evidence="1">
    <location>
        <position position="63"/>
    </location>
</feature>
<feature type="binding site" evidence="1">
    <location>
        <begin position="34"/>
        <end position="41"/>
    </location>
    <ligand>
        <name>ATP</name>
        <dbReference type="ChEBI" id="CHEBI:30616"/>
    </ligand>
</feature>
<feature type="binding site" evidence="1">
    <location>
        <position position="245"/>
    </location>
    <ligand>
        <name>ATP</name>
        <dbReference type="ChEBI" id="CHEBI:30616"/>
    </ligand>
</feature>
<feature type="binding site" evidence="1">
    <location>
        <position position="272"/>
    </location>
    <ligand>
        <name>ATP</name>
        <dbReference type="ChEBI" id="CHEBI:30616"/>
    </ligand>
</feature>
<feature type="binding site" evidence="1">
    <location>
        <position position="283"/>
    </location>
    <ligand>
        <name>Zn(2+)</name>
        <dbReference type="ChEBI" id="CHEBI:29105"/>
        <note>ligand shared between dimeric partners</note>
    </ligand>
</feature>
<feature type="binding site" evidence="1">
    <location>
        <position position="286"/>
    </location>
    <ligand>
        <name>Zn(2+)</name>
        <dbReference type="ChEBI" id="CHEBI:29105"/>
        <note>ligand shared between dimeric partners</note>
    </ligand>
</feature>
<name>GET3_PARBA</name>
<gene>
    <name evidence="1" type="primary">GET3</name>
    <name type="ORF">PAAG_01947</name>
</gene>
<accession>C1GTV2</accession>
<proteinExistence type="inferred from homology"/>
<sequence length="341" mass="37431">MSSAAMLTAEDSLEPTLQNLLDQKTLRWVFVGGKGGVGKTTTSCSLAIQLAKVRKSVLLISTDPAHNLSDAFGQKFGKEARLIDGFTNLSAMEIDPNGSIQDLLAASGGQGDDSMGGLGIGGMMQDLAFSIPGVDEAMSFAEVLKQVKSLSYEVIIFDTAPTGHTLRFLQFPTVLEKALAKLAQLSTQFGPMLNSILGGRGGLPGGQNLDEILSKMESLRETIAEVNAQFKDADLTTFVCVCIAEFLSLYETERMIQELTSYHIDTHCIVVNQLLFPGKDSSCEQCKARRKMQKKYLNEIEELYEDFNVVRMPMLVEEVRGKEKLEKFSDMLVHPYVPPQE</sequence>
<protein>
    <recommendedName>
        <fullName evidence="1">ATPase GET3</fullName>
        <ecNumber evidence="1">3.6.-.-</ecNumber>
    </recommendedName>
    <alternativeName>
        <fullName evidence="1">Arsenical pump-driving ATPase</fullName>
    </alternativeName>
    <alternativeName>
        <fullName evidence="1">Arsenite-stimulated ATPase</fullName>
    </alternativeName>
    <alternativeName>
        <fullName evidence="1">Golgi to ER traffic protein 3</fullName>
    </alternativeName>
    <alternativeName>
        <fullName evidence="1">Guided entry of tail-anchored proteins 3</fullName>
    </alternativeName>
</protein>